<name>ACPS_LISW6</name>
<evidence type="ECO:0000255" key="1">
    <source>
        <dbReference type="HAMAP-Rule" id="MF_00101"/>
    </source>
</evidence>
<protein>
    <recommendedName>
        <fullName evidence="1">Holo-[acyl-carrier-protein] synthase</fullName>
        <shortName evidence="1">Holo-ACP synthase</shortName>
        <ecNumber evidence="1">2.7.8.7</ecNumber>
    </recommendedName>
    <alternativeName>
        <fullName evidence="1">4'-phosphopantetheinyl transferase AcpS</fullName>
    </alternativeName>
</protein>
<feature type="chain" id="PRO_1000008446" description="Holo-[acyl-carrier-protein] synthase">
    <location>
        <begin position="1"/>
        <end position="118"/>
    </location>
</feature>
<feature type="binding site" evidence="1">
    <location>
        <position position="8"/>
    </location>
    <ligand>
        <name>Mg(2+)</name>
        <dbReference type="ChEBI" id="CHEBI:18420"/>
    </ligand>
</feature>
<feature type="binding site" evidence="1">
    <location>
        <position position="58"/>
    </location>
    <ligand>
        <name>Mg(2+)</name>
        <dbReference type="ChEBI" id="CHEBI:18420"/>
    </ligand>
</feature>
<sequence>MIKGIGLDMIDLERVKQVLEKNPRFIERVLTEKEIKQFEKYEGSRKIEFLAGRFAAKEAYAKANGTGFGKHLSFTDVEILQVEDGRPHVTMPIKSGETVFVSITHTARSAAAQVIIEI</sequence>
<accession>A0AH03</accession>
<proteinExistence type="inferred from homology"/>
<reference key="1">
    <citation type="journal article" date="2006" name="J. Bacteriol.">
        <title>Whole-genome sequence of Listeria welshimeri reveals common steps in genome reduction with Listeria innocua as compared to Listeria monocytogenes.</title>
        <authorList>
            <person name="Hain T."/>
            <person name="Steinweg C."/>
            <person name="Kuenne C.T."/>
            <person name="Billion A."/>
            <person name="Ghai R."/>
            <person name="Chatterjee S.S."/>
            <person name="Domann E."/>
            <person name="Kaerst U."/>
            <person name="Goesmann A."/>
            <person name="Bekel T."/>
            <person name="Bartels D."/>
            <person name="Kaiser O."/>
            <person name="Meyer F."/>
            <person name="Puehler A."/>
            <person name="Weisshaar B."/>
            <person name="Wehland J."/>
            <person name="Liang C."/>
            <person name="Dandekar T."/>
            <person name="Lampidis R."/>
            <person name="Kreft J."/>
            <person name="Goebel W."/>
            <person name="Chakraborty T."/>
        </authorList>
    </citation>
    <scope>NUCLEOTIDE SEQUENCE [LARGE SCALE GENOMIC DNA]</scope>
    <source>
        <strain>ATCC 35897 / DSM 20650 / CCUG 15529 / CIP 8149 / NCTC 11857 / SLCC 5334 / V8</strain>
    </source>
</reference>
<organism>
    <name type="scientific">Listeria welshimeri serovar 6b (strain ATCC 35897 / DSM 20650 / CCUG 15529 / CIP 8149 / NCTC 11857 / SLCC 5334 / V8)</name>
    <dbReference type="NCBI Taxonomy" id="386043"/>
    <lineage>
        <taxon>Bacteria</taxon>
        <taxon>Bacillati</taxon>
        <taxon>Bacillota</taxon>
        <taxon>Bacilli</taxon>
        <taxon>Bacillales</taxon>
        <taxon>Listeriaceae</taxon>
        <taxon>Listeria</taxon>
    </lineage>
</organism>
<gene>
    <name evidence="1" type="primary">acpS</name>
    <name type="ordered locus">lwe0867</name>
</gene>
<keyword id="KW-0963">Cytoplasm</keyword>
<keyword id="KW-0275">Fatty acid biosynthesis</keyword>
<keyword id="KW-0276">Fatty acid metabolism</keyword>
<keyword id="KW-0444">Lipid biosynthesis</keyword>
<keyword id="KW-0443">Lipid metabolism</keyword>
<keyword id="KW-0460">Magnesium</keyword>
<keyword id="KW-0479">Metal-binding</keyword>
<keyword id="KW-0808">Transferase</keyword>
<dbReference type="EC" id="2.7.8.7" evidence="1"/>
<dbReference type="EMBL" id="AM263198">
    <property type="protein sequence ID" value="CAK20285.1"/>
    <property type="molecule type" value="Genomic_DNA"/>
</dbReference>
<dbReference type="RefSeq" id="WP_011701703.1">
    <property type="nucleotide sequence ID" value="NC_008555.1"/>
</dbReference>
<dbReference type="SMR" id="A0AH03"/>
<dbReference type="STRING" id="386043.lwe0867"/>
<dbReference type="GeneID" id="61188755"/>
<dbReference type="KEGG" id="lwe:lwe0867"/>
<dbReference type="eggNOG" id="COG0736">
    <property type="taxonomic scope" value="Bacteria"/>
</dbReference>
<dbReference type="HOGENOM" id="CLU_089696_1_2_9"/>
<dbReference type="OrthoDB" id="517356at2"/>
<dbReference type="Proteomes" id="UP000000779">
    <property type="component" value="Chromosome"/>
</dbReference>
<dbReference type="GO" id="GO:0005737">
    <property type="term" value="C:cytoplasm"/>
    <property type="evidence" value="ECO:0007669"/>
    <property type="project" value="UniProtKB-SubCell"/>
</dbReference>
<dbReference type="GO" id="GO:0008897">
    <property type="term" value="F:holo-[acyl-carrier-protein] synthase activity"/>
    <property type="evidence" value="ECO:0007669"/>
    <property type="project" value="UniProtKB-UniRule"/>
</dbReference>
<dbReference type="GO" id="GO:0000287">
    <property type="term" value="F:magnesium ion binding"/>
    <property type="evidence" value="ECO:0007669"/>
    <property type="project" value="UniProtKB-UniRule"/>
</dbReference>
<dbReference type="GO" id="GO:0006633">
    <property type="term" value="P:fatty acid biosynthetic process"/>
    <property type="evidence" value="ECO:0007669"/>
    <property type="project" value="UniProtKB-UniRule"/>
</dbReference>
<dbReference type="Gene3D" id="3.90.470.20">
    <property type="entry name" value="4'-phosphopantetheinyl transferase domain"/>
    <property type="match status" value="1"/>
</dbReference>
<dbReference type="HAMAP" id="MF_00101">
    <property type="entry name" value="AcpS"/>
    <property type="match status" value="1"/>
</dbReference>
<dbReference type="InterPro" id="IPR008278">
    <property type="entry name" value="4-PPantetheinyl_Trfase_dom"/>
</dbReference>
<dbReference type="InterPro" id="IPR037143">
    <property type="entry name" value="4-PPantetheinyl_Trfase_dom_sf"/>
</dbReference>
<dbReference type="InterPro" id="IPR002582">
    <property type="entry name" value="ACPS"/>
</dbReference>
<dbReference type="InterPro" id="IPR004568">
    <property type="entry name" value="Ppantetheine-prot_Trfase_dom"/>
</dbReference>
<dbReference type="NCBIfam" id="TIGR00516">
    <property type="entry name" value="acpS"/>
    <property type="match status" value="1"/>
</dbReference>
<dbReference type="NCBIfam" id="TIGR00556">
    <property type="entry name" value="pantethn_trn"/>
    <property type="match status" value="1"/>
</dbReference>
<dbReference type="Pfam" id="PF01648">
    <property type="entry name" value="ACPS"/>
    <property type="match status" value="1"/>
</dbReference>
<dbReference type="SUPFAM" id="SSF56214">
    <property type="entry name" value="4'-phosphopantetheinyl transferase"/>
    <property type="match status" value="1"/>
</dbReference>
<comment type="function">
    <text evidence="1">Transfers the 4'-phosphopantetheine moiety from coenzyme A to a Ser of acyl-carrier-protein.</text>
</comment>
<comment type="catalytic activity">
    <reaction evidence="1">
        <text>apo-[ACP] + CoA = holo-[ACP] + adenosine 3',5'-bisphosphate + H(+)</text>
        <dbReference type="Rhea" id="RHEA:12068"/>
        <dbReference type="Rhea" id="RHEA-COMP:9685"/>
        <dbReference type="Rhea" id="RHEA-COMP:9690"/>
        <dbReference type="ChEBI" id="CHEBI:15378"/>
        <dbReference type="ChEBI" id="CHEBI:29999"/>
        <dbReference type="ChEBI" id="CHEBI:57287"/>
        <dbReference type="ChEBI" id="CHEBI:58343"/>
        <dbReference type="ChEBI" id="CHEBI:64479"/>
        <dbReference type="EC" id="2.7.8.7"/>
    </reaction>
</comment>
<comment type="cofactor">
    <cofactor evidence="1">
        <name>Mg(2+)</name>
        <dbReference type="ChEBI" id="CHEBI:18420"/>
    </cofactor>
</comment>
<comment type="subcellular location">
    <subcellularLocation>
        <location evidence="1">Cytoplasm</location>
    </subcellularLocation>
</comment>
<comment type="similarity">
    <text evidence="1">Belongs to the P-Pant transferase superfamily. AcpS family.</text>
</comment>